<keyword id="KW-0012">Acyltransferase</keyword>
<keyword id="KW-0150">Chloroplast</keyword>
<keyword id="KW-0450">Lipoyl</keyword>
<keyword id="KW-0934">Plastid</keyword>
<keyword id="KW-1185">Reference proteome</keyword>
<keyword id="KW-0808">Transferase</keyword>
<keyword id="KW-0809">Transit peptide</keyword>
<organism>
    <name type="scientific">Arabidopsis thaliana</name>
    <name type="common">Mouse-ear cress</name>
    <dbReference type="NCBI Taxonomy" id="3702"/>
    <lineage>
        <taxon>Eukaryota</taxon>
        <taxon>Viridiplantae</taxon>
        <taxon>Streptophyta</taxon>
        <taxon>Embryophyta</taxon>
        <taxon>Tracheophyta</taxon>
        <taxon>Spermatophyta</taxon>
        <taxon>Magnoliopsida</taxon>
        <taxon>eudicotyledons</taxon>
        <taxon>Gunneridae</taxon>
        <taxon>Pentapetalae</taxon>
        <taxon>rosids</taxon>
        <taxon>malvids</taxon>
        <taxon>Brassicales</taxon>
        <taxon>Brassicaceae</taxon>
        <taxon>Camelineae</taxon>
        <taxon>Arabidopsis</taxon>
    </lineage>
</organism>
<proteinExistence type="evidence at transcript level"/>
<feature type="transit peptide" description="Chloroplast" evidence="2">
    <location>
        <begin position="1"/>
        <end position="31"/>
    </location>
</feature>
<feature type="chain" id="PRO_0000430349" description="Dihydrolipoyllysine-residue acetyltransferase component 5 of pyruvate dehydrogenase complex, chloroplastic">
    <location>
        <begin position="32"/>
        <end position="465"/>
    </location>
</feature>
<feature type="domain" description="Lipoyl-binding" evidence="3">
    <location>
        <begin position="39"/>
        <end position="114"/>
    </location>
</feature>
<feature type="domain" description="Peripheral subunit-binding (PSBD)" evidence="4">
    <location>
        <begin position="184"/>
        <end position="221"/>
    </location>
</feature>
<feature type="region of interest" description="Disordered" evidence="5">
    <location>
        <begin position="123"/>
        <end position="148"/>
    </location>
</feature>
<feature type="compositionally biased region" description="Low complexity" evidence="5">
    <location>
        <begin position="136"/>
        <end position="148"/>
    </location>
</feature>
<feature type="active site" evidence="2">
    <location>
        <position position="438"/>
    </location>
</feature>
<feature type="modified residue" description="N6-lipoyllysine" evidence="1 3">
    <location>
        <position position="80"/>
    </location>
</feature>
<feature type="sequence conflict" description="In Ref. 4; AAM60857." evidence="6" ref="4">
    <location>
        <begin position="129"/>
        <end position="130"/>
    </location>
</feature>
<feature type="sequence conflict" description="In Ref. 4; AAM60857." evidence="6" ref="4">
    <original>P</original>
    <variation>PP</variation>
    <location>
        <position position="139"/>
    </location>
</feature>
<feature type="sequence conflict" description="In Ref. 4; AAM60857." evidence="6" ref="4">
    <original>AVEAPVSVEKKVAAAPVS</original>
    <variation>TVVAPVAVEKKIAAPPVA</variation>
    <location>
        <begin position="147"/>
        <end position="164"/>
    </location>
</feature>
<feature type="sequence conflict" description="In Ref. 4; AAM60857." evidence="6" ref="4">
    <original>K</original>
    <variation>N</variation>
    <location>
        <position position="197"/>
    </location>
</feature>
<feature type="sequence conflict" description="In Ref. 4; AAM60857." evidence="6" ref="4">
    <original>A</original>
    <variation>V</variation>
    <location>
        <position position="238"/>
    </location>
</feature>
<feature type="sequence conflict" description="In Ref. 4; AAM60857." evidence="6" ref="4">
    <original>G</original>
    <variation>A</variation>
    <location>
        <position position="265"/>
    </location>
</feature>
<accession>Q9C8P0</accession>
<accession>Q8LGH6</accession>
<accession>Q9LNK4</accession>
<reference key="1">
    <citation type="journal article" date="2000" name="Nature">
        <title>Sequence and analysis of chromosome 1 of the plant Arabidopsis thaliana.</title>
        <authorList>
            <person name="Theologis A."/>
            <person name="Ecker J.R."/>
            <person name="Palm C.J."/>
            <person name="Federspiel N.A."/>
            <person name="Kaul S."/>
            <person name="White O."/>
            <person name="Alonso J."/>
            <person name="Altafi H."/>
            <person name="Araujo R."/>
            <person name="Bowman C.L."/>
            <person name="Brooks S.Y."/>
            <person name="Buehler E."/>
            <person name="Chan A."/>
            <person name="Chao Q."/>
            <person name="Chen H."/>
            <person name="Cheuk R.F."/>
            <person name="Chin C.W."/>
            <person name="Chung M.K."/>
            <person name="Conn L."/>
            <person name="Conway A.B."/>
            <person name="Conway A.R."/>
            <person name="Creasy T.H."/>
            <person name="Dewar K."/>
            <person name="Dunn P."/>
            <person name="Etgu P."/>
            <person name="Feldblyum T.V."/>
            <person name="Feng J.-D."/>
            <person name="Fong B."/>
            <person name="Fujii C.Y."/>
            <person name="Gill J.E."/>
            <person name="Goldsmith A.D."/>
            <person name="Haas B."/>
            <person name="Hansen N.F."/>
            <person name="Hughes B."/>
            <person name="Huizar L."/>
            <person name="Hunter J.L."/>
            <person name="Jenkins J."/>
            <person name="Johnson-Hopson C."/>
            <person name="Khan S."/>
            <person name="Khaykin E."/>
            <person name="Kim C.J."/>
            <person name="Koo H.L."/>
            <person name="Kremenetskaia I."/>
            <person name="Kurtz D.B."/>
            <person name="Kwan A."/>
            <person name="Lam B."/>
            <person name="Langin-Hooper S."/>
            <person name="Lee A."/>
            <person name="Lee J.M."/>
            <person name="Lenz C.A."/>
            <person name="Li J.H."/>
            <person name="Li Y.-P."/>
            <person name="Lin X."/>
            <person name="Liu S.X."/>
            <person name="Liu Z.A."/>
            <person name="Luros J.S."/>
            <person name="Maiti R."/>
            <person name="Marziali A."/>
            <person name="Militscher J."/>
            <person name="Miranda M."/>
            <person name="Nguyen M."/>
            <person name="Nierman W.C."/>
            <person name="Osborne B.I."/>
            <person name="Pai G."/>
            <person name="Peterson J."/>
            <person name="Pham P.K."/>
            <person name="Rizzo M."/>
            <person name="Rooney T."/>
            <person name="Rowley D."/>
            <person name="Sakano H."/>
            <person name="Salzberg S.L."/>
            <person name="Schwartz J.R."/>
            <person name="Shinn P."/>
            <person name="Southwick A.M."/>
            <person name="Sun H."/>
            <person name="Tallon L.J."/>
            <person name="Tambunga G."/>
            <person name="Toriumi M.J."/>
            <person name="Town C.D."/>
            <person name="Utterback T."/>
            <person name="Van Aken S."/>
            <person name="Vaysberg M."/>
            <person name="Vysotskaia V.S."/>
            <person name="Walker M."/>
            <person name="Wu D."/>
            <person name="Yu G."/>
            <person name="Fraser C.M."/>
            <person name="Venter J.C."/>
            <person name="Davis R.W."/>
        </authorList>
    </citation>
    <scope>NUCLEOTIDE SEQUENCE [LARGE SCALE GENOMIC DNA]</scope>
    <source>
        <strain>cv. Columbia</strain>
    </source>
</reference>
<reference key="2">
    <citation type="journal article" date="2017" name="Plant J.">
        <title>Araport11: a complete reannotation of the Arabidopsis thaliana reference genome.</title>
        <authorList>
            <person name="Cheng C.Y."/>
            <person name="Krishnakumar V."/>
            <person name="Chan A.P."/>
            <person name="Thibaud-Nissen F."/>
            <person name="Schobel S."/>
            <person name="Town C.D."/>
        </authorList>
    </citation>
    <scope>GENOME REANNOTATION</scope>
    <source>
        <strain>cv. Columbia</strain>
    </source>
</reference>
<reference key="3">
    <citation type="journal article" date="2003" name="Science">
        <title>Empirical analysis of transcriptional activity in the Arabidopsis genome.</title>
        <authorList>
            <person name="Yamada K."/>
            <person name="Lim J."/>
            <person name="Dale J.M."/>
            <person name="Chen H."/>
            <person name="Shinn P."/>
            <person name="Palm C.J."/>
            <person name="Southwick A.M."/>
            <person name="Wu H.C."/>
            <person name="Kim C.J."/>
            <person name="Nguyen M."/>
            <person name="Pham P.K."/>
            <person name="Cheuk R.F."/>
            <person name="Karlin-Newmann G."/>
            <person name="Liu S.X."/>
            <person name="Lam B."/>
            <person name="Sakano H."/>
            <person name="Wu T."/>
            <person name="Yu G."/>
            <person name="Miranda M."/>
            <person name="Quach H.L."/>
            <person name="Tripp M."/>
            <person name="Chang C.H."/>
            <person name="Lee J.M."/>
            <person name="Toriumi M.J."/>
            <person name="Chan M.M."/>
            <person name="Tang C.C."/>
            <person name="Onodera C.S."/>
            <person name="Deng J.M."/>
            <person name="Akiyama K."/>
            <person name="Ansari Y."/>
            <person name="Arakawa T."/>
            <person name="Banh J."/>
            <person name="Banno F."/>
            <person name="Bowser L."/>
            <person name="Brooks S.Y."/>
            <person name="Carninci P."/>
            <person name="Chao Q."/>
            <person name="Choy N."/>
            <person name="Enju A."/>
            <person name="Goldsmith A.D."/>
            <person name="Gurjal M."/>
            <person name="Hansen N.F."/>
            <person name="Hayashizaki Y."/>
            <person name="Johnson-Hopson C."/>
            <person name="Hsuan V.W."/>
            <person name="Iida K."/>
            <person name="Karnes M."/>
            <person name="Khan S."/>
            <person name="Koesema E."/>
            <person name="Ishida J."/>
            <person name="Jiang P.X."/>
            <person name="Jones T."/>
            <person name="Kawai J."/>
            <person name="Kamiya A."/>
            <person name="Meyers C."/>
            <person name="Nakajima M."/>
            <person name="Narusaka M."/>
            <person name="Seki M."/>
            <person name="Sakurai T."/>
            <person name="Satou M."/>
            <person name="Tamse R."/>
            <person name="Vaysberg M."/>
            <person name="Wallender E.K."/>
            <person name="Wong C."/>
            <person name="Yamamura Y."/>
            <person name="Yuan S."/>
            <person name="Shinozaki K."/>
            <person name="Davis R.W."/>
            <person name="Theologis A."/>
            <person name="Ecker J.R."/>
        </authorList>
    </citation>
    <scope>NUCLEOTIDE SEQUENCE [LARGE SCALE MRNA]</scope>
    <source>
        <strain>cv. Columbia</strain>
    </source>
</reference>
<reference key="4">
    <citation type="submission" date="2002-03" db="EMBL/GenBank/DDBJ databases">
        <title>Full-length cDNA from Arabidopsis thaliana.</title>
        <authorList>
            <person name="Brover V.V."/>
            <person name="Troukhan M.E."/>
            <person name="Alexandrov N.A."/>
            <person name="Lu Y.-P."/>
            <person name="Flavell R.B."/>
            <person name="Feldmann K.A."/>
        </authorList>
    </citation>
    <scope>NUCLEOTIDE SEQUENCE [LARGE SCALE MRNA]</scope>
</reference>
<protein>
    <recommendedName>
        <fullName>Dihydrolipoyllysine-residue acetyltransferase component 5 of pyruvate dehydrogenase complex, chloroplastic</fullName>
        <ecNumber>2.3.1.12</ecNumber>
    </recommendedName>
    <alternativeName>
        <fullName>Dihydrolipoamide S-acetyltransferase component 5 of pyruvate dehydrogenase complex</fullName>
    </alternativeName>
    <alternativeName>
        <fullName>Protein EMBRYO DEFECTIVE 3003</fullName>
    </alternativeName>
    <alternativeName>
        <fullName>Pyruvate dehydrogenase complex component E2 5</fullName>
        <shortName>PDC-E2 5</shortName>
        <shortName>PDCE2 5</shortName>
    </alternativeName>
</protein>
<evidence type="ECO:0000250" key="1"/>
<evidence type="ECO:0000255" key="2"/>
<evidence type="ECO:0000255" key="3">
    <source>
        <dbReference type="PROSITE-ProRule" id="PRU01066"/>
    </source>
</evidence>
<evidence type="ECO:0000255" key="4">
    <source>
        <dbReference type="PROSITE-ProRule" id="PRU01170"/>
    </source>
</evidence>
<evidence type="ECO:0000256" key="5">
    <source>
        <dbReference type="SAM" id="MobiDB-lite"/>
    </source>
</evidence>
<evidence type="ECO:0000305" key="6"/>
<gene>
    <name type="primary">EMB3003</name>
    <name type="ordered locus">At1g34430</name>
    <name type="ORF">F12K21.24</name>
    <name type="ORF">F7P12.2</name>
</gene>
<dbReference type="EC" id="2.3.1.12"/>
<dbReference type="EMBL" id="AC023279">
    <property type="protein sequence ID" value="AAF79262.1"/>
    <property type="status" value="ALT_SEQ"/>
    <property type="molecule type" value="Genomic_DNA"/>
</dbReference>
<dbReference type="EMBL" id="AC023913">
    <property type="protein sequence ID" value="AAG51893.1"/>
    <property type="molecule type" value="Genomic_DNA"/>
</dbReference>
<dbReference type="EMBL" id="CP002684">
    <property type="protein sequence ID" value="AEE31713.1"/>
    <property type="molecule type" value="Genomic_DNA"/>
</dbReference>
<dbReference type="EMBL" id="AY128294">
    <property type="protein sequence ID" value="AAM91102.1"/>
    <property type="molecule type" value="mRNA"/>
</dbReference>
<dbReference type="EMBL" id="BT001042">
    <property type="protein sequence ID" value="AAN46796.1"/>
    <property type="molecule type" value="mRNA"/>
</dbReference>
<dbReference type="EMBL" id="AY084265">
    <property type="protein sequence ID" value="AAM60857.1"/>
    <property type="molecule type" value="mRNA"/>
</dbReference>
<dbReference type="PIR" id="F86468">
    <property type="entry name" value="F86468"/>
</dbReference>
<dbReference type="RefSeq" id="NP_174703.1">
    <property type="nucleotide sequence ID" value="NM_103166.4"/>
</dbReference>
<dbReference type="SMR" id="Q9C8P0"/>
<dbReference type="BioGRID" id="25578">
    <property type="interactions" value="15"/>
</dbReference>
<dbReference type="FunCoup" id="Q9C8P0">
    <property type="interactions" value="931"/>
</dbReference>
<dbReference type="IntAct" id="Q9C8P0">
    <property type="interactions" value="12"/>
</dbReference>
<dbReference type="STRING" id="3702.Q9C8P0"/>
<dbReference type="iPTMnet" id="Q9C8P0"/>
<dbReference type="MetOSite" id="Q9C8P0"/>
<dbReference type="PaxDb" id="3702-AT1G34430.1"/>
<dbReference type="ProteomicsDB" id="250877"/>
<dbReference type="EnsemblPlants" id="AT1G34430.1">
    <property type="protein sequence ID" value="AT1G34430.1"/>
    <property type="gene ID" value="AT1G34430"/>
</dbReference>
<dbReference type="GeneID" id="840346"/>
<dbReference type="Gramene" id="AT1G34430.1">
    <property type="protein sequence ID" value="AT1G34430.1"/>
    <property type="gene ID" value="AT1G34430"/>
</dbReference>
<dbReference type="KEGG" id="ath:AT1G34430"/>
<dbReference type="Araport" id="AT1G34430"/>
<dbReference type="TAIR" id="AT1G34430">
    <property type="gene designation" value="EMB3003"/>
</dbReference>
<dbReference type="eggNOG" id="KOG0557">
    <property type="taxonomic scope" value="Eukaryota"/>
</dbReference>
<dbReference type="HOGENOM" id="CLU_016733_10_2_1"/>
<dbReference type="InParanoid" id="Q9C8P0"/>
<dbReference type="OMA" id="RAMAQNM"/>
<dbReference type="OrthoDB" id="537444at2759"/>
<dbReference type="PhylomeDB" id="Q9C8P0"/>
<dbReference type="BioCyc" id="ARA:AT1G34430-MONOMER"/>
<dbReference type="PRO" id="PR:Q9C8P0"/>
<dbReference type="Proteomes" id="UP000006548">
    <property type="component" value="Chromosome 1"/>
</dbReference>
<dbReference type="ExpressionAtlas" id="Q9C8P0">
    <property type="expression patterns" value="baseline and differential"/>
</dbReference>
<dbReference type="GO" id="GO:0009507">
    <property type="term" value="C:chloroplast"/>
    <property type="evidence" value="ECO:0007005"/>
    <property type="project" value="TAIR"/>
</dbReference>
<dbReference type="GO" id="GO:0009941">
    <property type="term" value="C:chloroplast envelope"/>
    <property type="evidence" value="ECO:0007005"/>
    <property type="project" value="TAIR"/>
</dbReference>
<dbReference type="GO" id="GO:0009570">
    <property type="term" value="C:chloroplast stroma"/>
    <property type="evidence" value="ECO:0007669"/>
    <property type="project" value="UniProtKB-SubCell"/>
</dbReference>
<dbReference type="GO" id="GO:0022626">
    <property type="term" value="C:cytosolic ribosome"/>
    <property type="evidence" value="ECO:0007005"/>
    <property type="project" value="TAIR"/>
</dbReference>
<dbReference type="GO" id="GO:0005634">
    <property type="term" value="C:nucleus"/>
    <property type="evidence" value="ECO:0007005"/>
    <property type="project" value="TAIR"/>
</dbReference>
<dbReference type="GO" id="GO:0045254">
    <property type="term" value="C:pyruvate dehydrogenase complex"/>
    <property type="evidence" value="ECO:0007669"/>
    <property type="project" value="InterPro"/>
</dbReference>
<dbReference type="GO" id="GO:0004742">
    <property type="term" value="F:dihydrolipoyllysine-residue acetyltransferase activity"/>
    <property type="evidence" value="ECO:0007669"/>
    <property type="project" value="UniProtKB-EC"/>
</dbReference>
<dbReference type="GO" id="GO:0019904">
    <property type="term" value="F:protein domain specific binding"/>
    <property type="evidence" value="ECO:0000353"/>
    <property type="project" value="CAFA"/>
</dbReference>
<dbReference type="GO" id="GO:0006086">
    <property type="term" value="P:pyruvate decarboxylation to acetyl-CoA"/>
    <property type="evidence" value="ECO:0007669"/>
    <property type="project" value="InterPro"/>
</dbReference>
<dbReference type="CDD" id="cd06849">
    <property type="entry name" value="lipoyl_domain"/>
    <property type="match status" value="1"/>
</dbReference>
<dbReference type="FunFam" id="2.40.50.100:FF:000010">
    <property type="entry name" value="Acetyltransferase component of pyruvate dehydrogenase complex"/>
    <property type="match status" value="1"/>
</dbReference>
<dbReference type="FunFam" id="3.30.559.10:FF:000018">
    <property type="entry name" value="Dihydrolipoamide acetyltransferase component of pyruvate dehydrogenase complex"/>
    <property type="match status" value="1"/>
</dbReference>
<dbReference type="FunFam" id="4.10.320.10:FF:000019">
    <property type="entry name" value="Dihydrolipoamide acetyltransferase component of pyruvate dehydrogenase complex"/>
    <property type="match status" value="1"/>
</dbReference>
<dbReference type="Gene3D" id="2.40.50.100">
    <property type="match status" value="1"/>
</dbReference>
<dbReference type="Gene3D" id="3.30.559.10">
    <property type="entry name" value="Chloramphenicol acetyltransferase-like domain"/>
    <property type="match status" value="1"/>
</dbReference>
<dbReference type="Gene3D" id="4.10.320.10">
    <property type="entry name" value="E3-binding domain"/>
    <property type="match status" value="1"/>
</dbReference>
<dbReference type="InterPro" id="IPR003016">
    <property type="entry name" value="2-oxoA_DH_lipoyl-BS"/>
</dbReference>
<dbReference type="InterPro" id="IPR001078">
    <property type="entry name" value="2-oxoacid_DH_actylTfrase"/>
</dbReference>
<dbReference type="InterPro" id="IPR000089">
    <property type="entry name" value="Biotin_lipoyl"/>
</dbReference>
<dbReference type="InterPro" id="IPR023213">
    <property type="entry name" value="CAT-like_dom_sf"/>
</dbReference>
<dbReference type="InterPro" id="IPR045257">
    <property type="entry name" value="E2/Pdx1"/>
</dbReference>
<dbReference type="InterPro" id="IPR036625">
    <property type="entry name" value="E3-bd_dom_sf"/>
</dbReference>
<dbReference type="InterPro" id="IPR004167">
    <property type="entry name" value="PSBD"/>
</dbReference>
<dbReference type="InterPro" id="IPR011053">
    <property type="entry name" value="Single_hybrid_motif"/>
</dbReference>
<dbReference type="PANTHER" id="PTHR23151">
    <property type="entry name" value="DIHYDROLIPOAMIDE ACETYL/SUCCINYL-TRANSFERASE-RELATED"/>
    <property type="match status" value="1"/>
</dbReference>
<dbReference type="PANTHER" id="PTHR23151:SF75">
    <property type="entry name" value="DIHYDROLIPOYLLYSINE-RESIDUE ACETYLTRANSFERASE COMPONENT 5 OF PYRUVATE DEHYDROGENASE COMPLEX, CHLOROPLASTIC"/>
    <property type="match status" value="1"/>
</dbReference>
<dbReference type="Pfam" id="PF00198">
    <property type="entry name" value="2-oxoacid_dh"/>
    <property type="match status" value="1"/>
</dbReference>
<dbReference type="Pfam" id="PF00364">
    <property type="entry name" value="Biotin_lipoyl"/>
    <property type="match status" value="1"/>
</dbReference>
<dbReference type="Pfam" id="PF02817">
    <property type="entry name" value="E3_binding"/>
    <property type="match status" value="1"/>
</dbReference>
<dbReference type="SUPFAM" id="SSF52777">
    <property type="entry name" value="CoA-dependent acyltransferases"/>
    <property type="match status" value="1"/>
</dbReference>
<dbReference type="SUPFAM" id="SSF47005">
    <property type="entry name" value="Peripheral subunit-binding domain of 2-oxo acid dehydrogenase complex"/>
    <property type="match status" value="1"/>
</dbReference>
<dbReference type="SUPFAM" id="SSF51230">
    <property type="entry name" value="Single hybrid motif"/>
    <property type="match status" value="1"/>
</dbReference>
<dbReference type="PROSITE" id="PS50968">
    <property type="entry name" value="BIOTINYL_LIPOYL"/>
    <property type="match status" value="1"/>
</dbReference>
<dbReference type="PROSITE" id="PS00189">
    <property type="entry name" value="LIPOYL"/>
    <property type="match status" value="1"/>
</dbReference>
<dbReference type="PROSITE" id="PS51826">
    <property type="entry name" value="PSBD"/>
    <property type="match status" value="1"/>
</dbReference>
<comment type="function">
    <text evidence="1">The pyruvate dehydrogenase complex catalyzes the overall conversion of pyruvate to acetyl-CoA and CO(2). It contains multiple copies of three enzymatic components: pyruvate dehydrogenase (E1), dihydrolipoamide acetyltransferase (E2) and lipoamide dehydrogenase (E3) (By similarity).</text>
</comment>
<comment type="catalytic activity">
    <reaction>
        <text>N(6)-[(R)-dihydrolipoyl]-L-lysyl-[protein] + acetyl-CoA = N(6)-[(R)-S(8)-acetyldihydrolipoyl]-L-lysyl-[protein] + CoA</text>
        <dbReference type="Rhea" id="RHEA:17017"/>
        <dbReference type="Rhea" id="RHEA-COMP:10475"/>
        <dbReference type="Rhea" id="RHEA-COMP:10478"/>
        <dbReference type="ChEBI" id="CHEBI:57287"/>
        <dbReference type="ChEBI" id="CHEBI:57288"/>
        <dbReference type="ChEBI" id="CHEBI:83100"/>
        <dbReference type="ChEBI" id="CHEBI:83111"/>
        <dbReference type="EC" id="2.3.1.12"/>
    </reaction>
</comment>
<comment type="cofactor">
    <cofactor evidence="1">
        <name>(R)-lipoate</name>
        <dbReference type="ChEBI" id="CHEBI:83088"/>
    </cofactor>
    <text evidence="1">Binds 1 lipoyl cofactor covalently.</text>
</comment>
<comment type="subcellular location">
    <subcellularLocation>
        <location evidence="1">Plastid</location>
        <location evidence="1">Chloroplast stroma</location>
    </subcellularLocation>
</comment>
<comment type="similarity">
    <text evidence="6">Belongs to the 2-oxoacid dehydrogenase family.</text>
</comment>
<comment type="sequence caution" evidence="6">
    <conflict type="erroneous gene model prediction">
        <sequence resource="EMBL-CDS" id="AAF79262"/>
    </conflict>
</comment>
<name>ODP25_ARATH</name>
<sequence>MSRLLQTPFLPSVSLPTKTRSSVTGFRVKPRIIPIQAKIREIFMPALSSTMTEGKIVSWVKSEGDKLNKGESVVVVESDKADMDVETFYDGYLAAIMVEEGGVAPVGSAIALLAETEDEIADAKAKASGGGGGGDSKAPPASPPTAAVEAPVSVEKKVAAAPVSIKAVAASAVHPASEGGKRIVASPYAKKLAKELKVELAGLVGSGPMGRIVAKDVEAVAAGGGVQAAVAVKEVVAAPGVELGSVVPFTTMQGAVSRNMVESLGVPTFRVGYTISTDALDALYKKIKSKGVTMTALLAKATALALAKHPVVNSSCRDGNSFVYNSSINVAVAVAIDGGLITPVLQNADKVDIYSLSRKWKELVDKARAKQLQPQEYNTGTFTLSNLGMFGVDRFDAILPPGTGAIMAVGASQPSVVATKDGRIGMKNQMQVNVTADHRVIYGADLAQFLQTLASIIEDPKDLTF</sequence>